<dbReference type="EC" id="2.3.1.-" evidence="1"/>
<dbReference type="EC" id="4.2.1.17" evidence="1"/>
<dbReference type="EC" id="1.1.1.211" evidence="1"/>
<dbReference type="EMBL" id="L12581">
    <property type="protein sequence ID" value="AAA03733.1"/>
    <property type="molecule type" value="mRNA"/>
</dbReference>
<dbReference type="EMBL" id="AF028609">
    <property type="protein sequence ID" value="AAB84118.1"/>
    <property type="molecule type" value="mRNA"/>
</dbReference>
<dbReference type="PIR" id="PN0511">
    <property type="entry name" value="PN0511"/>
</dbReference>
<dbReference type="RefSeq" id="NP_999127.1">
    <property type="nucleotide sequence ID" value="NM_213962.2"/>
</dbReference>
<dbReference type="SMR" id="Q29554"/>
<dbReference type="FunCoup" id="Q29554">
    <property type="interactions" value="1289"/>
</dbReference>
<dbReference type="IntAct" id="Q29554">
    <property type="interactions" value="1"/>
</dbReference>
<dbReference type="STRING" id="9823.ENSSSCP00000009137"/>
<dbReference type="GlyGen" id="Q29554">
    <property type="glycosylation" value="1 site"/>
</dbReference>
<dbReference type="PaxDb" id="9823-ENSSSCP00000009137"/>
<dbReference type="PeptideAtlas" id="Q29554"/>
<dbReference type="Ensembl" id="ENSSSCT00000009377.5">
    <property type="protein sequence ID" value="ENSSSCP00000009137.2"/>
    <property type="gene ID" value="ENSSSCG00000008571.5"/>
</dbReference>
<dbReference type="Ensembl" id="ENSSSCT00055017005.1">
    <property type="protein sequence ID" value="ENSSSCP00055013425.1"/>
    <property type="gene ID" value="ENSSSCG00055008692.1"/>
</dbReference>
<dbReference type="Ensembl" id="ENSSSCT00070023491.1">
    <property type="protein sequence ID" value="ENSSSCP00070019432.1"/>
    <property type="gene ID" value="ENSSSCG00070012038.1"/>
</dbReference>
<dbReference type="Ensembl" id="ENSSSCT00085029020">
    <property type="protein sequence ID" value="ENSSSCP00085019902"/>
    <property type="gene ID" value="ENSSSCG00085015351"/>
</dbReference>
<dbReference type="Ensembl" id="ENSSSCT00115012536">
    <property type="protein sequence ID" value="ENSSSCP00115011844"/>
    <property type="gene ID" value="ENSSSCG00115007163"/>
</dbReference>
<dbReference type="GeneID" id="397012"/>
<dbReference type="KEGG" id="ssc:397012"/>
<dbReference type="CTD" id="3030"/>
<dbReference type="VGNC" id="VGNC:88772">
    <property type="gene designation" value="HADHA"/>
</dbReference>
<dbReference type="eggNOG" id="KOG1683">
    <property type="taxonomic scope" value="Eukaryota"/>
</dbReference>
<dbReference type="GeneTree" id="ENSGT00940000154677"/>
<dbReference type="HOGENOM" id="CLU_009834_16_1_1"/>
<dbReference type="InParanoid" id="Q29554"/>
<dbReference type="OMA" id="ESTTIRW"/>
<dbReference type="OrthoDB" id="10004768at2759"/>
<dbReference type="TreeFam" id="TF352288"/>
<dbReference type="Reactome" id="R-SSC-1482798">
    <property type="pathway name" value="Acyl chain remodeling of CL"/>
</dbReference>
<dbReference type="Reactome" id="R-SSC-77285">
    <property type="pathway name" value="Beta oxidation of myristoyl-CoA to lauroyl-CoA"/>
</dbReference>
<dbReference type="Reactome" id="R-SSC-77305">
    <property type="pathway name" value="Beta oxidation of palmitoyl-CoA to myristoyl-CoA"/>
</dbReference>
<dbReference type="Reactome" id="R-SSC-77310">
    <property type="pathway name" value="Beta oxidation of lauroyl-CoA to decanoyl-CoA-CoA"/>
</dbReference>
<dbReference type="Reactome" id="R-SSC-77346">
    <property type="pathway name" value="Beta oxidation of decanoyl-CoA to octanoyl-CoA-CoA"/>
</dbReference>
<dbReference type="Reactome" id="R-SSC-77348">
    <property type="pathway name" value="Beta oxidation of octanoyl-CoA to hexanoyl-CoA"/>
</dbReference>
<dbReference type="Reactome" id="R-SSC-77350">
    <property type="pathway name" value="Beta oxidation of hexanoyl-CoA to butanoyl-CoA"/>
</dbReference>
<dbReference type="UniPathway" id="UPA00659"/>
<dbReference type="Proteomes" id="UP000008227">
    <property type="component" value="Chromosome 3"/>
</dbReference>
<dbReference type="Proteomes" id="UP000314985">
    <property type="component" value="Chromosome 3"/>
</dbReference>
<dbReference type="Proteomes" id="UP000694570">
    <property type="component" value="Unplaced"/>
</dbReference>
<dbReference type="Proteomes" id="UP000694571">
    <property type="component" value="Unplaced"/>
</dbReference>
<dbReference type="Proteomes" id="UP000694720">
    <property type="component" value="Unplaced"/>
</dbReference>
<dbReference type="Proteomes" id="UP000694722">
    <property type="component" value="Unplaced"/>
</dbReference>
<dbReference type="Proteomes" id="UP000694723">
    <property type="component" value="Unplaced"/>
</dbReference>
<dbReference type="Proteomes" id="UP000694724">
    <property type="component" value="Unplaced"/>
</dbReference>
<dbReference type="Proteomes" id="UP000694725">
    <property type="component" value="Unplaced"/>
</dbReference>
<dbReference type="Proteomes" id="UP000694726">
    <property type="component" value="Unplaced"/>
</dbReference>
<dbReference type="Proteomes" id="UP000694727">
    <property type="component" value="Unplaced"/>
</dbReference>
<dbReference type="Proteomes" id="UP000694728">
    <property type="component" value="Unplaced"/>
</dbReference>
<dbReference type="Bgee" id="ENSSSCG00000008571">
    <property type="expression patterns" value="Expressed in psoas major muscle and 43 other cell types or tissues"/>
</dbReference>
<dbReference type="ExpressionAtlas" id="Q29554">
    <property type="expression patterns" value="baseline and differential"/>
</dbReference>
<dbReference type="GO" id="GO:0016507">
    <property type="term" value="C:mitochondrial fatty acid beta-oxidation multienzyme complex"/>
    <property type="evidence" value="ECO:0000318"/>
    <property type="project" value="GO_Central"/>
</dbReference>
<dbReference type="GO" id="GO:0005743">
    <property type="term" value="C:mitochondrial inner membrane"/>
    <property type="evidence" value="ECO:0007669"/>
    <property type="project" value="UniProtKB-SubCell"/>
</dbReference>
<dbReference type="GO" id="GO:0042645">
    <property type="term" value="C:mitochondrial nucleoid"/>
    <property type="evidence" value="ECO:0007669"/>
    <property type="project" value="Ensembl"/>
</dbReference>
<dbReference type="GO" id="GO:0005739">
    <property type="term" value="C:mitochondrion"/>
    <property type="evidence" value="ECO:0000250"/>
    <property type="project" value="UniProtKB"/>
</dbReference>
<dbReference type="GO" id="GO:0004300">
    <property type="term" value="F:enoyl-CoA hydratase activity"/>
    <property type="evidence" value="ECO:0000318"/>
    <property type="project" value="GO_Central"/>
</dbReference>
<dbReference type="GO" id="GO:0052816">
    <property type="term" value="F:long-chain fatty acyl-CoA hydrolase activity"/>
    <property type="evidence" value="ECO:0007669"/>
    <property type="project" value="Ensembl"/>
</dbReference>
<dbReference type="GO" id="GO:0016509">
    <property type="term" value="F:long-chain-3-hydroxyacyl-CoA dehydrogenase activity"/>
    <property type="evidence" value="ECO:0000318"/>
    <property type="project" value="GO_Central"/>
</dbReference>
<dbReference type="GO" id="GO:0070403">
    <property type="term" value="F:NAD+ binding"/>
    <property type="evidence" value="ECO:0007669"/>
    <property type="project" value="InterPro"/>
</dbReference>
<dbReference type="GO" id="GO:0016740">
    <property type="term" value="F:transferase activity"/>
    <property type="evidence" value="ECO:0007669"/>
    <property type="project" value="UniProtKB-KW"/>
</dbReference>
<dbReference type="GO" id="GO:0035965">
    <property type="term" value="P:cardiolipin acyl-chain remodeling"/>
    <property type="evidence" value="ECO:0000250"/>
    <property type="project" value="UniProtKB"/>
</dbReference>
<dbReference type="GO" id="GO:0006635">
    <property type="term" value="P:fatty acid beta-oxidation"/>
    <property type="evidence" value="ECO:0000318"/>
    <property type="project" value="GO_Central"/>
</dbReference>
<dbReference type="GO" id="GO:0032868">
    <property type="term" value="P:response to insulin"/>
    <property type="evidence" value="ECO:0007669"/>
    <property type="project" value="Ensembl"/>
</dbReference>
<dbReference type="CDD" id="cd06558">
    <property type="entry name" value="crotonase-like"/>
    <property type="match status" value="1"/>
</dbReference>
<dbReference type="FunFam" id="3.90.226.10:FF:000011">
    <property type="entry name" value="Fatty acid oxidation complex subunit alpha"/>
    <property type="match status" value="1"/>
</dbReference>
<dbReference type="FunFam" id="3.40.50.720:FF:000009">
    <property type="entry name" value="Fatty oxidation complex, alpha subunit"/>
    <property type="match status" value="1"/>
</dbReference>
<dbReference type="FunFam" id="1.10.1040.50:FF:000002">
    <property type="entry name" value="Trifunctional enzyme subunit alpha, mitochondrial"/>
    <property type="match status" value="1"/>
</dbReference>
<dbReference type="Gene3D" id="1.10.1040.50">
    <property type="match status" value="1"/>
</dbReference>
<dbReference type="Gene3D" id="3.90.226.10">
    <property type="entry name" value="2-enoyl-CoA Hydratase, Chain A, domain 1"/>
    <property type="match status" value="1"/>
</dbReference>
<dbReference type="Gene3D" id="3.40.50.720">
    <property type="entry name" value="NAD(P)-binding Rossmann-like Domain"/>
    <property type="match status" value="1"/>
</dbReference>
<dbReference type="InterPro" id="IPR006180">
    <property type="entry name" value="3-OHacyl-CoA_DH_CS"/>
</dbReference>
<dbReference type="InterPro" id="IPR006176">
    <property type="entry name" value="3-OHacyl-CoA_DH_NAD-bd"/>
</dbReference>
<dbReference type="InterPro" id="IPR006108">
    <property type="entry name" value="3HC_DH_C"/>
</dbReference>
<dbReference type="InterPro" id="IPR008927">
    <property type="entry name" value="6-PGluconate_DH-like_C_sf"/>
</dbReference>
<dbReference type="InterPro" id="IPR029045">
    <property type="entry name" value="ClpP/crotonase-like_dom_sf"/>
</dbReference>
<dbReference type="InterPro" id="IPR018376">
    <property type="entry name" value="Enoyl-CoA_hyd/isom_CS"/>
</dbReference>
<dbReference type="InterPro" id="IPR001753">
    <property type="entry name" value="Enoyl-CoA_hydra/iso"/>
</dbReference>
<dbReference type="InterPro" id="IPR012803">
    <property type="entry name" value="Fa_ox_alpha_mit"/>
</dbReference>
<dbReference type="InterPro" id="IPR050136">
    <property type="entry name" value="FA_oxidation_alpha_subunit"/>
</dbReference>
<dbReference type="InterPro" id="IPR036291">
    <property type="entry name" value="NAD(P)-bd_dom_sf"/>
</dbReference>
<dbReference type="NCBIfam" id="TIGR02441">
    <property type="entry name" value="fa_ox_alpha_mit"/>
    <property type="match status" value="1"/>
</dbReference>
<dbReference type="PANTHER" id="PTHR43612">
    <property type="entry name" value="TRIFUNCTIONAL ENZYME SUBUNIT ALPHA"/>
    <property type="match status" value="1"/>
</dbReference>
<dbReference type="PANTHER" id="PTHR43612:SF3">
    <property type="entry name" value="TRIFUNCTIONAL ENZYME SUBUNIT ALPHA, MITOCHONDRIAL"/>
    <property type="match status" value="1"/>
</dbReference>
<dbReference type="Pfam" id="PF00725">
    <property type="entry name" value="3HCDH"/>
    <property type="match status" value="1"/>
</dbReference>
<dbReference type="Pfam" id="PF02737">
    <property type="entry name" value="3HCDH_N"/>
    <property type="match status" value="1"/>
</dbReference>
<dbReference type="Pfam" id="PF00378">
    <property type="entry name" value="ECH_1"/>
    <property type="match status" value="1"/>
</dbReference>
<dbReference type="SUPFAM" id="SSF48179">
    <property type="entry name" value="6-phosphogluconate dehydrogenase C-terminal domain-like"/>
    <property type="match status" value="2"/>
</dbReference>
<dbReference type="SUPFAM" id="SSF52096">
    <property type="entry name" value="ClpP/crotonase"/>
    <property type="match status" value="1"/>
</dbReference>
<dbReference type="SUPFAM" id="SSF51735">
    <property type="entry name" value="NAD(P)-binding Rossmann-fold domains"/>
    <property type="match status" value="1"/>
</dbReference>
<dbReference type="PROSITE" id="PS00067">
    <property type="entry name" value="3HCDH"/>
    <property type="match status" value="1"/>
</dbReference>
<dbReference type="PROSITE" id="PS00166">
    <property type="entry name" value="ENOYL_COA_HYDRATASE"/>
    <property type="match status" value="1"/>
</dbReference>
<sequence>MVASRAIGSLRRFTASQTLRCPGYICRNFTRSSALLTRTHINYGVKGDVAVIRINSPNSKVNTLGQELHSEFIEVMNEVWSSSQIRSAVLISSKPGCFIAGADINMLSACTTSQEVTQISQEAQRTFEKLEKSTKPIVAAINGTCLGGGLELAISCQYRIATKDKKTVLGAPEVLLGILPGAGGTQRLPKMVGVPAAFDMMLTGRGIRADKAKKMGLVDQLVEPLGPGLKPPEERTIEYLEEVAVTFAKGLADKKISPKRDKGLVEKLTSYAMSIPFVRQQIYKKVEEKVRKQTKGLYPAPLKIIDVVKTGIEQGSDAGYLSESQKFGELAMTKESKALMGLYRGQTLCKKNKFGAPQKEVKHLAILGAGLMGAGIAQVSVDKHLKTILKDASLPALGRGQQQVFKGLNDKVRKKALTSFERDSLFSNLTGQLDYQGFEKADMVIEAVFEELSLKHKVLKEVEAVIPDHCVFASNTSALPISEIAAVSKRPEKVIGMHYFSPVDKMQLLEIITTEKTSKDSTASAVEVGLKQGKVIIVVKDGPGFYTTRCLAPMMSEVLRILQEGVGPKKLDSLTTSFGFPVGAATLMDEVGMDVAKHVAENLGKIFGERFAGGNLDVLKQMISKGFLGRKSGKGFYVYQEGVKNRNVNSDTESILASLKIPSRPDISSDEDIQYRLVTRFVNEAVLCLQEGILATPAEGDIGAVFGLGFPPCLGGPFRFVDLYGAQKVVDRLRKYEAIYGKQFTPCQLLIDHASSPNKKFFQ</sequence>
<organism>
    <name type="scientific">Sus scrofa</name>
    <name type="common">Pig</name>
    <dbReference type="NCBI Taxonomy" id="9823"/>
    <lineage>
        <taxon>Eukaryota</taxon>
        <taxon>Metazoa</taxon>
        <taxon>Chordata</taxon>
        <taxon>Craniata</taxon>
        <taxon>Vertebrata</taxon>
        <taxon>Euteleostomi</taxon>
        <taxon>Mammalia</taxon>
        <taxon>Eutheria</taxon>
        <taxon>Laurasiatheria</taxon>
        <taxon>Artiodactyla</taxon>
        <taxon>Suina</taxon>
        <taxon>Suidae</taxon>
        <taxon>Sus</taxon>
    </lineage>
</organism>
<feature type="transit peptide" description="Mitochondrion" evidence="4">
    <location>
        <begin position="1"/>
        <end position="36"/>
    </location>
</feature>
<feature type="chain" id="PRO_0000007404" description="Trifunctional enzyme subunit alpha, mitochondrial">
    <location>
        <begin position="37"/>
        <end position="763"/>
    </location>
</feature>
<feature type="active site" description="For hydroxyacyl-coenzyme A dehydrogenase activity" evidence="1">
    <location>
        <position position="510"/>
    </location>
</feature>
<feature type="site" description="Important for long-chain enoyl-CoA hydratase activity" evidence="1">
    <location>
        <position position="151"/>
    </location>
</feature>
<feature type="site" description="Important for long-chain enoyl-CoA hydratase activity" evidence="1">
    <location>
        <position position="173"/>
    </location>
</feature>
<feature type="site" description="Important for hydroxyacyl-coenzyme A dehydrogenase activity" evidence="1">
    <location>
        <position position="498"/>
    </location>
</feature>
<feature type="modified residue" description="N6-acetyllysine; alternate" evidence="3">
    <location>
        <position position="46"/>
    </location>
</feature>
<feature type="modified residue" description="N6-succinyllysine; alternate" evidence="3">
    <location>
        <position position="46"/>
    </location>
</feature>
<feature type="modified residue" description="N6-acetyllysine; alternate" evidence="3">
    <location>
        <position position="60"/>
    </location>
</feature>
<feature type="modified residue" description="N6-succinyllysine; alternate" evidence="3">
    <location>
        <position position="60"/>
    </location>
</feature>
<feature type="modified residue" description="N6-acetyllysine" evidence="3">
    <location>
        <position position="129"/>
    </location>
</feature>
<feature type="modified residue" description="N6-acetyllysine; alternate" evidence="3">
    <location>
        <position position="166"/>
    </location>
</feature>
<feature type="modified residue" description="N6-succinyllysine; alternate" evidence="3">
    <location>
        <position position="166"/>
    </location>
</feature>
<feature type="modified residue" description="N6-succinyllysine" evidence="3">
    <location>
        <position position="213"/>
    </location>
</feature>
<feature type="modified residue" description="N6-acetyllysine; alternate" evidence="3">
    <location>
        <position position="214"/>
    </location>
</feature>
<feature type="modified residue" description="N6-succinyllysine; alternate" evidence="3">
    <location>
        <position position="214"/>
    </location>
</feature>
<feature type="modified residue" description="N6-succinyllysine" evidence="3">
    <location>
        <position position="230"/>
    </location>
</feature>
<feature type="modified residue" description="N6-acetyllysine; alternate" evidence="3">
    <location>
        <position position="249"/>
    </location>
</feature>
<feature type="modified residue" description="N6-succinyllysine; alternate" evidence="3">
    <location>
        <position position="249"/>
    </location>
</feature>
<feature type="modified residue" description="N6-acetyllysine" evidence="3">
    <location>
        <position position="289"/>
    </location>
</feature>
<feature type="modified residue" description="N6-acetyllysine" evidence="1">
    <location>
        <position position="295"/>
    </location>
</feature>
<feature type="modified residue" description="N6-acetyllysine; alternate" evidence="1">
    <location>
        <position position="303"/>
    </location>
</feature>
<feature type="modified residue" description="N6-succinyllysine; alternate" evidence="3">
    <location>
        <position position="303"/>
    </location>
</feature>
<feature type="modified residue" description="Phosphoserine" evidence="3">
    <location>
        <position position="316"/>
    </location>
</feature>
<feature type="modified residue" description="N6-acetyllysine; alternate" evidence="3">
    <location>
        <position position="326"/>
    </location>
</feature>
<feature type="modified residue" description="N6-succinyllysine; alternate" evidence="3">
    <location>
        <position position="326"/>
    </location>
</feature>
<feature type="modified residue" description="N6-acetyllysine; alternate" evidence="3">
    <location>
        <position position="334"/>
    </location>
</feature>
<feature type="modified residue" description="N6-succinyllysine; alternate" evidence="3">
    <location>
        <position position="334"/>
    </location>
</feature>
<feature type="modified residue" description="N6-acetyllysine; alternate" evidence="3">
    <location>
        <position position="350"/>
    </location>
</feature>
<feature type="modified residue" description="N6-succinyllysine; alternate" evidence="3">
    <location>
        <position position="350"/>
    </location>
</feature>
<feature type="modified residue" description="N6-acetyllysine" evidence="3">
    <location>
        <position position="353"/>
    </location>
</feature>
<feature type="modified residue" description="Omega-N-methylarginine" evidence="3">
    <location>
        <position position="399"/>
    </location>
</feature>
<feature type="modified residue" description="N6-acetyllysine; alternate" evidence="1">
    <location>
        <position position="406"/>
    </location>
</feature>
<feature type="modified residue" description="N6-succinyllysine; alternate" evidence="3">
    <location>
        <position position="406"/>
    </location>
</feature>
<feature type="modified residue" description="N6-acetyllysine; alternate" evidence="3">
    <location>
        <position position="411"/>
    </location>
</feature>
<feature type="modified residue" description="N6-succinyllysine; alternate" evidence="3">
    <location>
        <position position="411"/>
    </location>
</feature>
<feature type="modified residue" description="N6-succinyllysine" evidence="3">
    <location>
        <position position="415"/>
    </location>
</feature>
<feature type="modified residue" description="Phosphoserine" evidence="2">
    <location>
        <position position="419"/>
    </location>
</feature>
<feature type="modified residue" description="N6-succinyllysine" evidence="3">
    <location>
        <position position="440"/>
    </location>
</feature>
<feature type="modified residue" description="N6-acetyllysine; alternate" evidence="3">
    <location>
        <position position="460"/>
    </location>
</feature>
<feature type="modified residue" description="N6-succinyllysine; alternate" evidence="3">
    <location>
        <position position="460"/>
    </location>
</feature>
<feature type="modified residue" description="N6-acetyllysine; alternate" evidence="1">
    <location>
        <position position="505"/>
    </location>
</feature>
<feature type="modified residue" description="N6-succinyllysine; alternate" evidence="3">
    <location>
        <position position="505"/>
    </location>
</feature>
<feature type="modified residue" description="N6-acetyllysine; alternate" evidence="3">
    <location>
        <position position="519"/>
    </location>
</feature>
<feature type="modified residue" description="N6-succinyllysine; alternate" evidence="3">
    <location>
        <position position="519"/>
    </location>
</feature>
<feature type="modified residue" description="N6-acetyllysine" evidence="1">
    <location>
        <position position="540"/>
    </location>
</feature>
<feature type="modified residue" description="N6-acetyllysine; alternate" evidence="3">
    <location>
        <position position="569"/>
    </location>
</feature>
<feature type="modified residue" description="N6-succinyllysine; alternate" evidence="3">
    <location>
        <position position="569"/>
    </location>
</feature>
<feature type="modified residue" description="N6-succinyllysine" evidence="3">
    <location>
        <position position="620"/>
    </location>
</feature>
<feature type="modified residue" description="N6-succinyllysine" evidence="3">
    <location>
        <position position="634"/>
    </location>
</feature>
<feature type="modified residue" description="N6-acetyllysine; alternate" evidence="1">
    <location>
        <position position="644"/>
    </location>
</feature>
<feature type="modified residue" description="N6-succinyllysine; alternate" evidence="3">
    <location>
        <position position="644"/>
    </location>
</feature>
<feature type="modified residue" description="Phosphoserine" evidence="2">
    <location>
        <position position="650"/>
    </location>
</feature>
<feature type="modified residue" description="N6-acetyllysine; alternate" evidence="3">
    <location>
        <position position="728"/>
    </location>
</feature>
<feature type="modified residue" description="N6-succinyllysine; alternate" evidence="3">
    <location>
        <position position="728"/>
    </location>
</feature>
<feature type="modified residue" description="N6-acetyllysine" evidence="3">
    <location>
        <position position="735"/>
    </location>
</feature>
<feature type="modified residue" description="Phosphoserine" evidence="1">
    <location>
        <position position="756"/>
    </location>
</feature>
<feature type="modified residue" description="N6-acetyllysine; alternate" evidence="3">
    <location>
        <position position="759"/>
    </location>
</feature>
<feature type="modified residue" description="N6-succinyllysine; alternate" evidence="3">
    <location>
        <position position="759"/>
    </location>
</feature>
<comment type="function">
    <text evidence="1">Mitochondrial trifunctional enzyme catalyzes the last three of the four reactions of the mitochondrial beta-oxidation pathway. The mitochondrial beta-oxidation pathway is the major energy-producing process in tissues and is performed through four consecutive reactions breaking down fatty acids into acetyl-CoA. Among the enzymes involved in this pathway, the trifunctional enzyme exhibits specificity for long-chain fatty acids. Mitochondrial trifunctional enzyme is a heterotetrameric complex composed of two proteins, the trifunctional enzyme subunit alpha/HADHA described here carries the 2,3-enoyl-CoA hydratase and the 3-hydroxyacyl-CoA dehydrogenase activities while the trifunctional enzyme subunit beta/HADHB bears the 3-ketoacyl-CoA thiolase activity. Independently of subunit beta, HADHA also exhibits a cardiolipin acyltransferase activity that participates in cardiolipin remodeling; cardiolipin is a major mitochondrial membrane phospholipid. HADHA may act downstream of Tafazzin/TAZ, that remodels monolysocardiolipin (MLCL) to a cardiolipin intermediate, and then HADHA may continue to remodel this species into mature tetralinoleoyl-cardiolipin. Has also been proposed to act directly on MLCL; capable of acylating MLCL using different acyl-CoA substrates, with highest activity for oleoyl-CoA.</text>
</comment>
<comment type="catalytic activity">
    <reaction evidence="1">
        <text>a (3S)-3-hydroxyacyl-CoA = a (2E)-enoyl-CoA + H2O</text>
        <dbReference type="Rhea" id="RHEA:16105"/>
        <dbReference type="ChEBI" id="CHEBI:15377"/>
        <dbReference type="ChEBI" id="CHEBI:57318"/>
        <dbReference type="ChEBI" id="CHEBI:58856"/>
        <dbReference type="EC" id="4.2.1.17"/>
    </reaction>
    <physiologicalReaction direction="right-to-left" evidence="1">
        <dbReference type="Rhea" id="RHEA:16107"/>
    </physiologicalReaction>
</comment>
<comment type="catalytic activity">
    <reaction evidence="1">
        <text>a 4-saturated-(3S)-3-hydroxyacyl-CoA = a (3E)-enoyl-CoA + H2O</text>
        <dbReference type="Rhea" id="RHEA:20724"/>
        <dbReference type="ChEBI" id="CHEBI:15377"/>
        <dbReference type="ChEBI" id="CHEBI:58521"/>
        <dbReference type="ChEBI" id="CHEBI:137480"/>
        <dbReference type="EC" id="4.2.1.17"/>
    </reaction>
    <physiologicalReaction direction="right-to-left" evidence="1">
        <dbReference type="Rhea" id="RHEA:20726"/>
    </physiologicalReaction>
</comment>
<comment type="catalytic activity">
    <reaction evidence="1">
        <text>(3S)-hydroxyoctanoyl-CoA = (2E)-octenoyl-CoA + H2O</text>
        <dbReference type="Rhea" id="RHEA:31199"/>
        <dbReference type="ChEBI" id="CHEBI:15377"/>
        <dbReference type="ChEBI" id="CHEBI:62242"/>
        <dbReference type="ChEBI" id="CHEBI:62617"/>
    </reaction>
    <physiologicalReaction direction="right-to-left" evidence="1">
        <dbReference type="Rhea" id="RHEA:31201"/>
    </physiologicalReaction>
</comment>
<comment type="catalytic activity">
    <reaction evidence="1">
        <text>(3S)-3-hydroxydodecanoyl-CoA = (2E)-dodecenoyl-CoA + H2O</text>
        <dbReference type="Rhea" id="RHEA:31075"/>
        <dbReference type="ChEBI" id="CHEBI:15377"/>
        <dbReference type="ChEBI" id="CHEBI:57330"/>
        <dbReference type="ChEBI" id="CHEBI:62558"/>
    </reaction>
    <physiologicalReaction direction="right-to-left" evidence="1">
        <dbReference type="Rhea" id="RHEA:31077"/>
    </physiologicalReaction>
</comment>
<comment type="catalytic activity">
    <reaction evidence="1">
        <text>(3S)-hydroxyhexadecanoyl-CoA = (2E)-hexadecenoyl-CoA + H2O</text>
        <dbReference type="Rhea" id="RHEA:31163"/>
        <dbReference type="ChEBI" id="CHEBI:15377"/>
        <dbReference type="ChEBI" id="CHEBI:61526"/>
        <dbReference type="ChEBI" id="CHEBI:62613"/>
    </reaction>
    <physiologicalReaction direction="right-to-left" evidence="1">
        <dbReference type="Rhea" id="RHEA:31165"/>
    </physiologicalReaction>
</comment>
<comment type="catalytic activity">
    <reaction evidence="1">
        <text>a long-chain (3S)-3-hydroxy fatty acyl-CoA + NAD(+) = a long-chain 3-oxo-fatty acyl-CoA + NADH + H(+)</text>
        <dbReference type="Rhea" id="RHEA:52656"/>
        <dbReference type="ChEBI" id="CHEBI:15378"/>
        <dbReference type="ChEBI" id="CHEBI:57540"/>
        <dbReference type="ChEBI" id="CHEBI:57945"/>
        <dbReference type="ChEBI" id="CHEBI:136757"/>
        <dbReference type="ChEBI" id="CHEBI:136758"/>
        <dbReference type="EC" id="1.1.1.211"/>
    </reaction>
    <physiologicalReaction direction="left-to-right" evidence="1">
        <dbReference type="Rhea" id="RHEA:52657"/>
    </physiologicalReaction>
</comment>
<comment type="catalytic activity">
    <reaction evidence="1">
        <text>(3S)-hydroxyoctanoyl-CoA + NAD(+) = 3-oxooctanoyl-CoA + NADH + H(+)</text>
        <dbReference type="Rhea" id="RHEA:31195"/>
        <dbReference type="ChEBI" id="CHEBI:15378"/>
        <dbReference type="ChEBI" id="CHEBI:57540"/>
        <dbReference type="ChEBI" id="CHEBI:57945"/>
        <dbReference type="ChEBI" id="CHEBI:62617"/>
        <dbReference type="ChEBI" id="CHEBI:62619"/>
    </reaction>
    <physiologicalReaction direction="left-to-right" evidence="1">
        <dbReference type="Rhea" id="RHEA:31196"/>
    </physiologicalReaction>
</comment>
<comment type="catalytic activity">
    <reaction evidence="1">
        <text>(3S)-hydroxydecanoyl-CoA + NAD(+) = 3-oxodecanoyl-CoA + NADH + H(+)</text>
        <dbReference type="Rhea" id="RHEA:31187"/>
        <dbReference type="ChEBI" id="CHEBI:15378"/>
        <dbReference type="ChEBI" id="CHEBI:57540"/>
        <dbReference type="ChEBI" id="CHEBI:57945"/>
        <dbReference type="ChEBI" id="CHEBI:62548"/>
        <dbReference type="ChEBI" id="CHEBI:62616"/>
    </reaction>
    <physiologicalReaction direction="left-to-right" evidence="1">
        <dbReference type="Rhea" id="RHEA:31188"/>
    </physiologicalReaction>
</comment>
<comment type="catalytic activity">
    <reaction evidence="1">
        <text>(3S)-3-hydroxydodecanoyl-CoA + NAD(+) = 3-oxododecanoyl-CoA + NADH + H(+)</text>
        <dbReference type="Rhea" id="RHEA:31179"/>
        <dbReference type="ChEBI" id="CHEBI:15378"/>
        <dbReference type="ChEBI" id="CHEBI:57540"/>
        <dbReference type="ChEBI" id="CHEBI:57945"/>
        <dbReference type="ChEBI" id="CHEBI:62558"/>
        <dbReference type="ChEBI" id="CHEBI:62615"/>
    </reaction>
    <physiologicalReaction direction="left-to-right" evidence="1">
        <dbReference type="Rhea" id="RHEA:31180"/>
    </physiologicalReaction>
</comment>
<comment type="catalytic activity">
    <reaction evidence="1">
        <text>(3S)-hydroxytetradecanoyl-CoA + NAD(+) = 3-oxotetradecanoyl-CoA + NADH + H(+)</text>
        <dbReference type="Rhea" id="RHEA:31167"/>
        <dbReference type="ChEBI" id="CHEBI:15378"/>
        <dbReference type="ChEBI" id="CHEBI:57540"/>
        <dbReference type="ChEBI" id="CHEBI:57945"/>
        <dbReference type="ChEBI" id="CHEBI:62543"/>
        <dbReference type="ChEBI" id="CHEBI:62614"/>
    </reaction>
    <physiologicalReaction direction="left-to-right" evidence="1">
        <dbReference type="Rhea" id="RHEA:31168"/>
    </physiologicalReaction>
</comment>
<comment type="catalytic activity">
    <reaction evidence="1">
        <text>(3S)-hydroxyhexadecanoyl-CoA + NAD(+) = 3-oxohexadecanoyl-CoA + NADH + H(+)</text>
        <dbReference type="Rhea" id="RHEA:31159"/>
        <dbReference type="ChEBI" id="CHEBI:15378"/>
        <dbReference type="ChEBI" id="CHEBI:57349"/>
        <dbReference type="ChEBI" id="CHEBI:57540"/>
        <dbReference type="ChEBI" id="CHEBI:57945"/>
        <dbReference type="ChEBI" id="CHEBI:62613"/>
    </reaction>
    <physiologicalReaction direction="left-to-right" evidence="1">
        <dbReference type="Rhea" id="RHEA:31160"/>
    </physiologicalReaction>
</comment>
<comment type="catalytic activity">
    <reaction evidence="1">
        <text>1'-[1,2-di-(9Z,12Z-octadecadienoyl)-sn-glycero-3-phospho]-3'-[1-(9Z,12Z-octadecadienoyl)-sn-glycero-3-phospho]-glycerol + hexadecanoyl-CoA = 1'-[1,2-di-(9Z,12Z-octadecadienoyl)-sn-glycero-3-phospho]-3'-[1-(9Z,12Z-octadecadienoyl)-2-hexadecanoyl-sn-glycero-3-phospho]-glycerol + CoA</text>
        <dbReference type="Rhea" id="RHEA:43680"/>
        <dbReference type="ChEBI" id="CHEBI:57287"/>
        <dbReference type="ChEBI" id="CHEBI:57379"/>
        <dbReference type="ChEBI" id="CHEBI:83580"/>
        <dbReference type="ChEBI" id="CHEBI:83583"/>
    </reaction>
    <physiologicalReaction direction="left-to-right" evidence="1">
        <dbReference type="Rhea" id="RHEA:43681"/>
    </physiologicalReaction>
</comment>
<comment type="catalytic activity">
    <reaction evidence="1">
        <text>1'-[1,2-di-(9Z,12Z-octadecadienoyl)-sn-glycero-3-phospho]-3'-[1-(9Z,12Z-octadecadienoyl)-sn-glycero-3-phospho]-glycerol + (9Z)-octadecenoyl-CoA = 1'-[1,2-di-(9Z,12Z-octadecadienoyl)-sn-glycero-3-phospho]-3'-[1-(9Z,12Z-octadecadienoyl)-2-(9Z-octadecenoyl)-sn-glycero-3-phospho]-glycerol + CoA</text>
        <dbReference type="Rhea" id="RHEA:43676"/>
        <dbReference type="ChEBI" id="CHEBI:57287"/>
        <dbReference type="ChEBI" id="CHEBI:57387"/>
        <dbReference type="ChEBI" id="CHEBI:83580"/>
        <dbReference type="ChEBI" id="CHEBI:83582"/>
    </reaction>
    <physiologicalReaction direction="left-to-right" evidence="1">
        <dbReference type="Rhea" id="RHEA:43677"/>
    </physiologicalReaction>
</comment>
<comment type="catalytic activity">
    <reaction evidence="1">
        <text>1'-[1,2-di-(9Z,12Z-octadecadienoyl)-sn-glycero-3-phospho]-3'-[1-(9Z,12Z-octadecadienoyl)-sn-glycero-3-phospho]-glycerol + (9Z,12Z)-octadecadienoyl-CoA = 1',3'-bis-[1,2-di-(9Z,12Z-octadecadienoyl)-sn-glycero-3-phospho]-glycerol + CoA</text>
        <dbReference type="Rhea" id="RHEA:43672"/>
        <dbReference type="ChEBI" id="CHEBI:57287"/>
        <dbReference type="ChEBI" id="CHEBI:57383"/>
        <dbReference type="ChEBI" id="CHEBI:83580"/>
        <dbReference type="ChEBI" id="CHEBI:83581"/>
    </reaction>
    <physiologicalReaction direction="left-to-right" evidence="1">
        <dbReference type="Rhea" id="RHEA:43673"/>
    </physiologicalReaction>
</comment>
<comment type="pathway">
    <text evidence="1">Lipid metabolism; fatty acid beta-oxidation.</text>
</comment>
<comment type="subunit">
    <text evidence="1 3">Heterotetramer of 2 alpha/HADHA and 2 beta/HADHB subunits; forms the mitochondrial trifunctional enzyme (By similarity). Also purified as higher order heterooligomers including a 4 alpha/HADHA and 4 beta/HADHB heterooligomer which physiological significance remains unclear (By similarity). The mitochondrial trifunctional enzyme interacts with MTLN (By similarity).</text>
</comment>
<comment type="subcellular location">
    <subcellularLocation>
        <location evidence="1">Mitochondrion</location>
    </subcellularLocation>
    <subcellularLocation>
        <location evidence="1">Mitochondrion inner membrane</location>
    </subcellularLocation>
    <text evidence="1">Protein stability and association with mitochondrion inner membrane do not require HADHB.</text>
</comment>
<comment type="similarity">
    <text evidence="5">In the N-terminal section; belongs to the enoyl-CoA hydratase/isomerase family.</text>
</comment>
<comment type="similarity">
    <text evidence="5">In the central section; belongs to the 3-hydroxyacyl-CoA dehydrogenase family.</text>
</comment>
<name>ECHA_PIG</name>
<gene>
    <name type="primary">HADHA</name>
    <name type="synonym">LCHYD-HAD</name>
</gene>
<evidence type="ECO:0000250" key="1">
    <source>
        <dbReference type="UniProtKB" id="P40939"/>
    </source>
</evidence>
<evidence type="ECO:0000250" key="2">
    <source>
        <dbReference type="UniProtKB" id="Q64428"/>
    </source>
</evidence>
<evidence type="ECO:0000250" key="3">
    <source>
        <dbReference type="UniProtKB" id="Q8BMS1"/>
    </source>
</evidence>
<evidence type="ECO:0000255" key="4"/>
<evidence type="ECO:0000305" key="5"/>
<reference key="1">
    <citation type="journal article" date="1993" name="Biochim. Biophys. Acta">
        <title>Nucleotide sequence encoding a novel member of the hydratase/dehydrogenase family.</title>
        <authorList>
            <person name="Mantamadiotis T."/>
            <person name="Sobieszczuk P."/>
            <person name="Weinstock J."/>
            <person name="Baldwin G.S."/>
        </authorList>
    </citation>
    <scope>NUCLEOTIDE SEQUENCE [MRNA]</scope>
    <source>
        <tissue>Stomach</tissue>
    </source>
</reference>
<reference key="2">
    <citation type="journal article" date="1994" name="Biochem. Biophys. Res. Commun.">
        <title>Primary structure of the large subunit of trifunctional beta-oxidation complex from pig heart mitochondria.</title>
        <authorList>
            <person name="Yang S.-Y."/>
            <person name="He X.-Y."/>
            <person name="Styles J."/>
            <person name="Luo M.J."/>
            <person name="Schulz H."/>
            <person name="Elzinga M."/>
        </authorList>
    </citation>
    <scope>NUCLEOTIDE SEQUENCE [MRNA]</scope>
    <source>
        <tissue>Heart</tissue>
    </source>
</reference>
<reference key="3">
    <citation type="journal article" date="1993" name="Biochem. Biophys. Res. Commun.">
        <title>Partial structure of the gene encoding the 78 kDa gastrin binding protein excludes a close relationship with the peroxisomal trifunctional enzyme.</title>
        <authorList>
            <person name="Baldwin G.S."/>
            <person name="Casey A."/>
            <person name="Weinstock J."/>
        </authorList>
    </citation>
    <scope>PARTIAL NUCLEOTIDE SEQUENCE</scope>
    <source>
        <tissue>Liver</tissue>
    </source>
</reference>
<reference key="4">
    <citation type="journal article" date="1994" name="Comp. Biochem. Physiol.">
        <title>The large subunit of the pig heart mitochondrial membrane-bound beta-oxidation complex is a long-chain enoyl-CoA hydratase: 3-hydroxyacyl-CoA dehydrogenase bifunctional enzyme.</title>
        <authorList>
            <person name="Yang S.-Y."/>
        </authorList>
    </citation>
    <scope>IDENTIFICATION</scope>
    <source>
        <tissue>Heart</tissue>
    </source>
</reference>
<accession>Q29554</accession>
<proteinExistence type="evidence at transcript level"/>
<keyword id="KW-0007">Acetylation</keyword>
<keyword id="KW-0276">Fatty acid metabolism</keyword>
<keyword id="KW-0443">Lipid metabolism</keyword>
<keyword id="KW-0456">Lyase</keyword>
<keyword id="KW-0472">Membrane</keyword>
<keyword id="KW-0488">Methylation</keyword>
<keyword id="KW-0496">Mitochondrion</keyword>
<keyword id="KW-0999">Mitochondrion inner membrane</keyword>
<keyword id="KW-0511">Multifunctional enzyme</keyword>
<keyword id="KW-0520">NAD</keyword>
<keyword id="KW-0560">Oxidoreductase</keyword>
<keyword id="KW-0597">Phosphoprotein</keyword>
<keyword id="KW-1185">Reference proteome</keyword>
<keyword id="KW-0808">Transferase</keyword>
<keyword id="KW-0809">Transit peptide</keyword>
<protein>
    <recommendedName>
        <fullName>Trifunctional enzyme subunit alpha, mitochondrial</fullName>
    </recommendedName>
    <alternativeName>
        <fullName>78 kDa gastrin-binding protein</fullName>
    </alternativeName>
    <alternativeName>
        <fullName evidence="1">Monolysocardiolipin acyltransferase</fullName>
        <shortName evidence="5">MLCL AT</shortName>
        <ecNumber evidence="1">2.3.1.-</ecNumber>
    </alternativeName>
    <alternativeName>
        <fullName>TP-alpha</fullName>
    </alternativeName>
    <domain>
        <recommendedName>
            <fullName>Long-chain enoyl-CoA hydratase</fullName>
            <ecNumber evidence="1">4.2.1.17</ecNumber>
        </recommendedName>
    </domain>
    <domain>
        <recommendedName>
            <fullName>Long chain 3-hydroxyacyl-CoA dehydrogenase</fullName>
            <ecNumber evidence="1">1.1.1.211</ecNumber>
        </recommendedName>
    </domain>
</protein>